<reference key="1">
    <citation type="submission" date="1995-02" db="EMBL/GenBank/DDBJ databases">
        <authorList>
            <person name="Liu Y.T."/>
        </authorList>
    </citation>
    <scope>NUCLEOTIDE SEQUENCE [GENOMIC DNA]</scope>
</reference>
<reference key="2">
    <citation type="journal article" date="2005" name="Nat. Biotechnol.">
        <title>Complete genome sequence of the acetic acid bacterium Gluconobacter oxydans.</title>
        <authorList>
            <person name="Prust C."/>
            <person name="Hoffmeister M."/>
            <person name="Liesegang H."/>
            <person name="Wiezer A."/>
            <person name="Fricke W.F."/>
            <person name="Ehrenreich A."/>
            <person name="Gottschalk G."/>
            <person name="Deppenmeier U."/>
        </authorList>
    </citation>
    <scope>NUCLEOTIDE SEQUENCE [LARGE SCALE GENOMIC DNA]</scope>
    <source>
        <strain>621H</strain>
    </source>
</reference>
<keyword id="KW-0067">ATP-binding</keyword>
<keyword id="KW-0963">Cytoplasm</keyword>
<keyword id="KW-0227">DNA damage</keyword>
<keyword id="KW-0233">DNA recombination</keyword>
<keyword id="KW-0234">DNA repair</keyword>
<keyword id="KW-0238">DNA-binding</keyword>
<keyword id="KW-0547">Nucleotide-binding</keyword>
<keyword id="KW-1185">Reference proteome</keyword>
<keyword id="KW-0742">SOS response</keyword>
<comment type="function">
    <text evidence="1">Can catalyze the hydrolysis of ATP in the presence of single-stranded DNA, the ATP-dependent uptake of single-stranded DNA by duplex DNA, and the ATP-dependent hybridization of homologous single-stranded DNAs. It interacts with LexA causing its activation and leading to its autocatalytic cleavage.</text>
</comment>
<comment type="subcellular location">
    <subcellularLocation>
        <location evidence="1">Cytoplasm</location>
    </subcellularLocation>
</comment>
<comment type="similarity">
    <text evidence="1">Belongs to the RecA family.</text>
</comment>
<organism>
    <name type="scientific">Gluconobacter oxydans (strain 621H)</name>
    <name type="common">Gluconobacter suboxydans</name>
    <dbReference type="NCBI Taxonomy" id="290633"/>
    <lineage>
        <taxon>Bacteria</taxon>
        <taxon>Pseudomonadati</taxon>
        <taxon>Pseudomonadota</taxon>
        <taxon>Alphaproteobacteria</taxon>
        <taxon>Acetobacterales</taxon>
        <taxon>Acetobacteraceae</taxon>
        <taxon>Gluconobacter</taxon>
    </lineage>
</organism>
<gene>
    <name evidence="1" type="primary">recA</name>
    <name type="ordered locus">GOX1522</name>
</gene>
<accession>P48289</accession>
<accession>Q5FQT2</accession>
<proteinExistence type="inferred from homology"/>
<feature type="chain" id="PRO_0000122720" description="Protein RecA">
    <location>
        <begin position="1"/>
        <end position="345"/>
    </location>
</feature>
<feature type="region of interest" description="Disordered" evidence="2">
    <location>
        <begin position="326"/>
        <end position="345"/>
    </location>
</feature>
<feature type="compositionally biased region" description="Acidic residues" evidence="2">
    <location>
        <begin position="335"/>
        <end position="345"/>
    </location>
</feature>
<feature type="binding site" evidence="1">
    <location>
        <begin position="63"/>
        <end position="70"/>
    </location>
    <ligand>
        <name>ATP</name>
        <dbReference type="ChEBI" id="CHEBI:30616"/>
    </ligand>
</feature>
<feature type="sequence conflict" description="In Ref. 1; AAA73517." evidence="3" ref="1">
    <original>VETN</original>
    <variation>EQAD</variation>
    <location>
        <begin position="32"/>
        <end position="35"/>
    </location>
</feature>
<feature type="sequence conflict" description="In Ref. 1; AAA73517." evidence="3" ref="1">
    <original>I</original>
    <variation>L</variation>
    <location>
        <position position="42"/>
    </location>
</feature>
<feature type="sequence conflict" description="In Ref. 1; AAA73517." evidence="3" ref="1">
    <original>F</original>
    <variation>V</variation>
    <location>
        <position position="89"/>
    </location>
</feature>
<feature type="sequence conflict" description="In Ref. 1; AAA73517." evidence="3" ref="1">
    <original>D</original>
    <variation>E</variation>
    <location>
        <position position="110"/>
    </location>
</feature>
<feature type="sequence conflict" description="In Ref. 1; AAA73517." evidence="3" ref="1">
    <original>A</original>
    <variation>C</variation>
    <location>
        <position position="126"/>
    </location>
</feature>
<feature type="sequence conflict" description="In Ref. 1; AAA73517." evidence="3" ref="1">
    <original>A</original>
    <variation>R</variation>
    <location>
        <position position="150"/>
    </location>
</feature>
<feature type="sequence conflict" description="In Ref. 1; AAA73517." evidence="3" ref="1">
    <original>IR</original>
    <variation>MG</variation>
    <location>
        <begin position="192"/>
        <end position="193"/>
    </location>
</feature>
<feature type="sequence conflict" description="In Ref. 1; AAA73517." evidence="3" ref="1">
    <original>R</original>
    <variation>H</variation>
    <location>
        <position position="224"/>
    </location>
</feature>
<feature type="sequence conflict" description="In Ref. 1; AAA73517." evidence="3" ref="1">
    <original>G</original>
    <variation>A</variation>
    <location>
        <position position="278"/>
    </location>
</feature>
<feature type="sequence conflict" description="In Ref. 1; AAA73517." evidence="3" ref="1">
    <original>EH</original>
    <variation>DD</variation>
    <location>
        <begin position="308"/>
        <end position="309"/>
    </location>
</feature>
<feature type="sequence conflict" description="In Ref. 1; AAA73517." evidence="3" ref="1">
    <original>A</original>
    <variation>S</variation>
    <location>
        <position position="313"/>
    </location>
</feature>
<feature type="sequence conflict" description="In Ref. 1; AAA73517." evidence="3" ref="1">
    <original>AE</original>
    <variation>SD</variation>
    <location>
        <begin position="322"/>
        <end position="323"/>
    </location>
</feature>
<feature type="sequence conflict" description="In Ref. 1; AAA73517." evidence="3" ref="1">
    <original>LS</original>
    <variation>VA</variation>
    <location>
        <begin position="327"/>
        <end position="328"/>
    </location>
</feature>
<feature type="sequence conflict" description="In Ref. 1; AAA73517." evidence="3" ref="1">
    <original>TD</original>
    <variation>VG</variation>
    <location>
        <begin position="333"/>
        <end position="334"/>
    </location>
</feature>
<feature type="sequence conflict" description="In Ref. 1." evidence="3" ref="1">
    <original>PDADGTPED</original>
    <variation>GDEASSDD</variation>
    <location>
        <begin position="337"/>
        <end position="345"/>
    </location>
</feature>
<name>RECA_GLUOX</name>
<evidence type="ECO:0000255" key="1">
    <source>
        <dbReference type="HAMAP-Rule" id="MF_00268"/>
    </source>
</evidence>
<evidence type="ECO:0000256" key="2">
    <source>
        <dbReference type="SAM" id="MobiDB-lite"/>
    </source>
</evidence>
<evidence type="ECO:0000305" key="3"/>
<dbReference type="EMBL" id="U21001">
    <property type="protein sequence ID" value="AAA73517.1"/>
    <property type="molecule type" value="Genomic_DNA"/>
</dbReference>
<dbReference type="EMBL" id="CP000009">
    <property type="protein sequence ID" value="AAW61264.1"/>
    <property type="molecule type" value="Genomic_DNA"/>
</dbReference>
<dbReference type="RefSeq" id="WP_011253049.1">
    <property type="nucleotide sequence ID" value="NC_006677.1"/>
</dbReference>
<dbReference type="SMR" id="P48289"/>
<dbReference type="STRING" id="290633.GOX1522"/>
<dbReference type="KEGG" id="gox:GOX1522"/>
<dbReference type="eggNOG" id="COG0468">
    <property type="taxonomic scope" value="Bacteria"/>
</dbReference>
<dbReference type="HOGENOM" id="CLU_040469_1_2_5"/>
<dbReference type="Proteomes" id="UP000006375">
    <property type="component" value="Chromosome"/>
</dbReference>
<dbReference type="GO" id="GO:0005829">
    <property type="term" value="C:cytosol"/>
    <property type="evidence" value="ECO:0007669"/>
    <property type="project" value="TreeGrafter"/>
</dbReference>
<dbReference type="GO" id="GO:0005524">
    <property type="term" value="F:ATP binding"/>
    <property type="evidence" value="ECO:0007669"/>
    <property type="project" value="UniProtKB-UniRule"/>
</dbReference>
<dbReference type="GO" id="GO:0016887">
    <property type="term" value="F:ATP hydrolysis activity"/>
    <property type="evidence" value="ECO:0007669"/>
    <property type="project" value="InterPro"/>
</dbReference>
<dbReference type="GO" id="GO:0140664">
    <property type="term" value="F:ATP-dependent DNA damage sensor activity"/>
    <property type="evidence" value="ECO:0007669"/>
    <property type="project" value="InterPro"/>
</dbReference>
<dbReference type="GO" id="GO:0003684">
    <property type="term" value="F:damaged DNA binding"/>
    <property type="evidence" value="ECO:0007669"/>
    <property type="project" value="UniProtKB-UniRule"/>
</dbReference>
<dbReference type="GO" id="GO:0003697">
    <property type="term" value="F:single-stranded DNA binding"/>
    <property type="evidence" value="ECO:0007669"/>
    <property type="project" value="UniProtKB-UniRule"/>
</dbReference>
<dbReference type="GO" id="GO:0006310">
    <property type="term" value="P:DNA recombination"/>
    <property type="evidence" value="ECO:0007669"/>
    <property type="project" value="UniProtKB-UniRule"/>
</dbReference>
<dbReference type="GO" id="GO:0006281">
    <property type="term" value="P:DNA repair"/>
    <property type="evidence" value="ECO:0007669"/>
    <property type="project" value="UniProtKB-UniRule"/>
</dbReference>
<dbReference type="GO" id="GO:0009432">
    <property type="term" value="P:SOS response"/>
    <property type="evidence" value="ECO:0007669"/>
    <property type="project" value="UniProtKB-UniRule"/>
</dbReference>
<dbReference type="CDD" id="cd00983">
    <property type="entry name" value="RecA"/>
    <property type="match status" value="1"/>
</dbReference>
<dbReference type="FunFam" id="3.40.50.300:FF:000087">
    <property type="entry name" value="Recombinase RecA"/>
    <property type="match status" value="1"/>
</dbReference>
<dbReference type="Gene3D" id="3.40.50.300">
    <property type="entry name" value="P-loop containing nucleotide triphosphate hydrolases"/>
    <property type="match status" value="1"/>
</dbReference>
<dbReference type="HAMAP" id="MF_00268">
    <property type="entry name" value="RecA"/>
    <property type="match status" value="1"/>
</dbReference>
<dbReference type="InterPro" id="IPR003593">
    <property type="entry name" value="AAA+_ATPase"/>
</dbReference>
<dbReference type="InterPro" id="IPR013765">
    <property type="entry name" value="DNA_recomb/repair_RecA"/>
</dbReference>
<dbReference type="InterPro" id="IPR020584">
    <property type="entry name" value="DNA_recomb/repair_RecA_CS"/>
</dbReference>
<dbReference type="InterPro" id="IPR027417">
    <property type="entry name" value="P-loop_NTPase"/>
</dbReference>
<dbReference type="InterPro" id="IPR049261">
    <property type="entry name" value="RecA-like_C"/>
</dbReference>
<dbReference type="InterPro" id="IPR049428">
    <property type="entry name" value="RecA-like_N"/>
</dbReference>
<dbReference type="InterPro" id="IPR020588">
    <property type="entry name" value="RecA_ATP-bd"/>
</dbReference>
<dbReference type="InterPro" id="IPR023400">
    <property type="entry name" value="RecA_C_sf"/>
</dbReference>
<dbReference type="InterPro" id="IPR020587">
    <property type="entry name" value="RecA_monomer-monomer_interface"/>
</dbReference>
<dbReference type="NCBIfam" id="TIGR02012">
    <property type="entry name" value="tigrfam_recA"/>
    <property type="match status" value="1"/>
</dbReference>
<dbReference type="PANTHER" id="PTHR45900:SF1">
    <property type="entry name" value="MITOCHONDRIAL DNA REPAIR PROTEIN RECA HOMOLOG-RELATED"/>
    <property type="match status" value="1"/>
</dbReference>
<dbReference type="PANTHER" id="PTHR45900">
    <property type="entry name" value="RECA"/>
    <property type="match status" value="1"/>
</dbReference>
<dbReference type="Pfam" id="PF00154">
    <property type="entry name" value="RecA"/>
    <property type="match status" value="1"/>
</dbReference>
<dbReference type="Pfam" id="PF21096">
    <property type="entry name" value="RecA_C"/>
    <property type="match status" value="1"/>
</dbReference>
<dbReference type="PRINTS" id="PR00142">
    <property type="entry name" value="RECA"/>
</dbReference>
<dbReference type="SMART" id="SM00382">
    <property type="entry name" value="AAA"/>
    <property type="match status" value="1"/>
</dbReference>
<dbReference type="SUPFAM" id="SSF52540">
    <property type="entry name" value="P-loop containing nucleoside triphosphate hydrolases"/>
    <property type="match status" value="1"/>
</dbReference>
<dbReference type="SUPFAM" id="SSF54752">
    <property type="entry name" value="RecA protein, C-terminal domain"/>
    <property type="match status" value="1"/>
</dbReference>
<dbReference type="PROSITE" id="PS00321">
    <property type="entry name" value="RECA_1"/>
    <property type="match status" value="1"/>
</dbReference>
<dbReference type="PROSITE" id="PS50162">
    <property type="entry name" value="RECA_2"/>
    <property type="match status" value="1"/>
</dbReference>
<dbReference type="PROSITE" id="PS50163">
    <property type="entry name" value="RECA_3"/>
    <property type="match status" value="1"/>
</dbReference>
<sequence length="345" mass="37256">MDKTKALEGALSQIERAFGKGSIMRMGQRPKVETNVISTGSIGLDIALGIGGMPRGRIVEIYGPESSGKTTLALHVLAEAQKKGGTVAFIDAEHALDPGYARKLGVNIDDLLLSQPDAGEQALEIADTLVRSGAVDVLVVDSVAALVPRAELEGDMGDSHVGLHARLMSQALRKLTGTVSRSNTLVIFLNQIRMKIGVMFGNPETTTGGNALKFYSSIRLDIRRIGSIKDKDEVVGNQTRVKVVKNKMAPPFRQVEFDIMYGEGISKMGELLDLGVKGNIVEKSGAWFSFDSQRIGQGRENAKQFLREHPEMASEIERRIRAEAGVLSDALMTDPEPDADGTPED</sequence>
<protein>
    <recommendedName>
        <fullName evidence="1">Protein RecA</fullName>
    </recommendedName>
    <alternativeName>
        <fullName evidence="1">Recombinase A</fullName>
    </alternativeName>
</protein>